<dbReference type="EC" id="2.4.2.53" evidence="1"/>
<dbReference type="EMBL" id="AM942759">
    <property type="protein sequence ID" value="CAR42270.1"/>
    <property type="molecule type" value="Genomic_DNA"/>
</dbReference>
<dbReference type="RefSeq" id="WP_004242618.1">
    <property type="nucleotide sequence ID" value="NC_010554.1"/>
</dbReference>
<dbReference type="SMR" id="B4ETL6"/>
<dbReference type="CAZy" id="GT2">
    <property type="family name" value="Glycosyltransferase Family 2"/>
</dbReference>
<dbReference type="EnsemblBacteria" id="CAR42270">
    <property type="protein sequence ID" value="CAR42270"/>
    <property type="gene ID" value="PMI1044"/>
</dbReference>
<dbReference type="GeneID" id="6799908"/>
<dbReference type="KEGG" id="pmr:PMI1044"/>
<dbReference type="eggNOG" id="COG0463">
    <property type="taxonomic scope" value="Bacteria"/>
</dbReference>
<dbReference type="HOGENOM" id="CLU_033536_0_0_6"/>
<dbReference type="UniPathway" id="UPA00030"/>
<dbReference type="UniPathway" id="UPA00036">
    <property type="reaction ID" value="UER00495"/>
</dbReference>
<dbReference type="Proteomes" id="UP000008319">
    <property type="component" value="Chromosome"/>
</dbReference>
<dbReference type="GO" id="GO:0005886">
    <property type="term" value="C:plasma membrane"/>
    <property type="evidence" value="ECO:0007669"/>
    <property type="project" value="UniProtKB-SubCell"/>
</dbReference>
<dbReference type="GO" id="GO:0016780">
    <property type="term" value="F:phosphotransferase activity, for other substituted phosphate groups"/>
    <property type="evidence" value="ECO:0007669"/>
    <property type="project" value="UniProtKB-UniRule"/>
</dbReference>
<dbReference type="GO" id="GO:0099621">
    <property type="term" value="F:undecaprenyl-phosphate 4-deoxy-4-formamido-L-arabinose transferase activity"/>
    <property type="evidence" value="ECO:0007669"/>
    <property type="project" value="UniProtKB-EC"/>
</dbReference>
<dbReference type="GO" id="GO:0036108">
    <property type="term" value="P:4-amino-4-deoxy-alpha-L-arabinopyranosyl undecaprenyl phosphate biosynthetic process"/>
    <property type="evidence" value="ECO:0007669"/>
    <property type="project" value="UniProtKB-UniRule"/>
</dbReference>
<dbReference type="GO" id="GO:0009245">
    <property type="term" value="P:lipid A biosynthetic process"/>
    <property type="evidence" value="ECO:0007669"/>
    <property type="project" value="UniProtKB-UniRule"/>
</dbReference>
<dbReference type="GO" id="GO:0009103">
    <property type="term" value="P:lipopolysaccharide biosynthetic process"/>
    <property type="evidence" value="ECO:0007669"/>
    <property type="project" value="UniProtKB-UniRule"/>
</dbReference>
<dbReference type="GO" id="GO:0046677">
    <property type="term" value="P:response to antibiotic"/>
    <property type="evidence" value="ECO:0007669"/>
    <property type="project" value="UniProtKB-KW"/>
</dbReference>
<dbReference type="CDD" id="cd04187">
    <property type="entry name" value="DPM1_like_bac"/>
    <property type="match status" value="1"/>
</dbReference>
<dbReference type="FunFam" id="3.90.550.10:FF:000019">
    <property type="entry name" value="Undecaprenyl-phosphate 4-deoxy-4-formamido-L-arabinose transferase"/>
    <property type="match status" value="1"/>
</dbReference>
<dbReference type="Gene3D" id="3.90.550.10">
    <property type="entry name" value="Spore Coat Polysaccharide Biosynthesis Protein SpsA, Chain A"/>
    <property type="match status" value="1"/>
</dbReference>
<dbReference type="HAMAP" id="MF_01164">
    <property type="entry name" value="ArnC_transfer"/>
    <property type="match status" value="1"/>
</dbReference>
<dbReference type="InterPro" id="IPR022857">
    <property type="entry name" value="ArnC_tfrase"/>
</dbReference>
<dbReference type="InterPro" id="IPR001173">
    <property type="entry name" value="Glyco_trans_2-like"/>
</dbReference>
<dbReference type="InterPro" id="IPR050256">
    <property type="entry name" value="Glycosyltransferase_2"/>
</dbReference>
<dbReference type="InterPro" id="IPR029044">
    <property type="entry name" value="Nucleotide-diphossugar_trans"/>
</dbReference>
<dbReference type="NCBIfam" id="NF007986">
    <property type="entry name" value="PRK10714.1"/>
    <property type="match status" value="1"/>
</dbReference>
<dbReference type="PANTHER" id="PTHR48090:SF3">
    <property type="entry name" value="UNDECAPRENYL-PHOSPHATE 4-DEOXY-4-FORMAMIDO-L-ARABINOSE TRANSFERASE"/>
    <property type="match status" value="1"/>
</dbReference>
<dbReference type="PANTHER" id="PTHR48090">
    <property type="entry name" value="UNDECAPRENYL-PHOSPHATE 4-DEOXY-4-FORMAMIDO-L-ARABINOSE TRANSFERASE-RELATED"/>
    <property type="match status" value="1"/>
</dbReference>
<dbReference type="Pfam" id="PF00535">
    <property type="entry name" value="Glycos_transf_2"/>
    <property type="match status" value="1"/>
</dbReference>
<dbReference type="SUPFAM" id="SSF53448">
    <property type="entry name" value="Nucleotide-diphospho-sugar transferases"/>
    <property type="match status" value="1"/>
</dbReference>
<accession>B4ETL6</accession>
<keyword id="KW-0046">Antibiotic resistance</keyword>
<keyword id="KW-0997">Cell inner membrane</keyword>
<keyword id="KW-1003">Cell membrane</keyword>
<keyword id="KW-0328">Glycosyltransferase</keyword>
<keyword id="KW-0441">Lipid A biosynthesis</keyword>
<keyword id="KW-0444">Lipid biosynthesis</keyword>
<keyword id="KW-0443">Lipid metabolism</keyword>
<keyword id="KW-0448">Lipopolysaccharide biosynthesis</keyword>
<keyword id="KW-0472">Membrane</keyword>
<keyword id="KW-1185">Reference proteome</keyword>
<keyword id="KW-0808">Transferase</keyword>
<keyword id="KW-0812">Transmembrane</keyword>
<keyword id="KW-1133">Transmembrane helix</keyword>
<proteinExistence type="inferred from homology"/>
<organism>
    <name type="scientific">Proteus mirabilis (strain HI4320)</name>
    <dbReference type="NCBI Taxonomy" id="529507"/>
    <lineage>
        <taxon>Bacteria</taxon>
        <taxon>Pseudomonadati</taxon>
        <taxon>Pseudomonadota</taxon>
        <taxon>Gammaproteobacteria</taxon>
        <taxon>Enterobacterales</taxon>
        <taxon>Morganellaceae</taxon>
        <taxon>Proteus</taxon>
    </lineage>
</organism>
<feature type="chain" id="PRO_0000380262" description="Undecaprenyl-phosphate 4-deoxy-4-formamido-L-arabinose transferase">
    <location>
        <begin position="1"/>
        <end position="326"/>
    </location>
</feature>
<feature type="transmembrane region" description="Helical" evidence="1">
    <location>
        <begin position="236"/>
        <end position="256"/>
    </location>
</feature>
<feature type="transmembrane region" description="Helical" evidence="1">
    <location>
        <begin position="270"/>
        <end position="290"/>
    </location>
</feature>
<protein>
    <recommendedName>
        <fullName evidence="1">Undecaprenyl-phosphate 4-deoxy-4-formamido-L-arabinose transferase</fullName>
        <ecNumber evidence="1">2.4.2.53</ecNumber>
    </recommendedName>
    <alternativeName>
        <fullName evidence="1">Undecaprenyl-phosphate Ara4FN transferase</fullName>
        <shortName evidence="1">Ara4FN transferase</shortName>
    </alternativeName>
</protein>
<gene>
    <name evidence="1" type="primary">arnC</name>
    <name type="ordered locus">PMI1044</name>
</gene>
<sequence>MSTFEKINKVSVVIPVYNEEESLPQLLERTIKSCKQLEQEYELILVDDGSSDNSAKMLEEAANIEDNHVIAIILNRNYGQHSAIMAGFNQADGDLVITLDADLQNPPEEIPRLVATAEEGYDVVGTRRRNRQDSWFRKTASKMINAMITKATGRSMGDYGCMLRAYRRHIIDAMLQCHERSTFIPILANTFARRTIEIEVAHAEREYGDSKYSFLKLINLMYDLLTCLTTAPLRLLSVVGSVIAVAGFLLAVLLIVLRLIFGAIWAADGVFTLFAILFMFIGAQFVAMGLLGEYIGRIYNDVRARPRYFIQKVVGVKKPNKNQEED</sequence>
<evidence type="ECO:0000255" key="1">
    <source>
        <dbReference type="HAMAP-Rule" id="MF_01164"/>
    </source>
</evidence>
<comment type="function">
    <text evidence="1">Catalyzes the transfer of 4-deoxy-4-formamido-L-arabinose from UDP to undecaprenyl phosphate. The modified arabinose is attached to lipid A and is required for resistance to polymyxin and cationic antimicrobial peptides.</text>
</comment>
<comment type="catalytic activity">
    <reaction evidence="1">
        <text>UDP-4-deoxy-4-formamido-beta-L-arabinose + di-trans,octa-cis-undecaprenyl phosphate = 4-deoxy-4-formamido-alpha-L-arabinopyranosyl di-trans,octa-cis-undecaprenyl phosphate + UDP</text>
        <dbReference type="Rhea" id="RHEA:27722"/>
        <dbReference type="ChEBI" id="CHEBI:58223"/>
        <dbReference type="ChEBI" id="CHEBI:58709"/>
        <dbReference type="ChEBI" id="CHEBI:58909"/>
        <dbReference type="ChEBI" id="CHEBI:60392"/>
        <dbReference type="EC" id="2.4.2.53"/>
    </reaction>
</comment>
<comment type="pathway">
    <text evidence="1">Glycolipid biosynthesis; 4-amino-4-deoxy-alpha-L-arabinose undecaprenyl phosphate biosynthesis; 4-amino-4-deoxy-alpha-L-arabinose undecaprenyl phosphate from UDP-4-deoxy-4-formamido-beta-L-arabinose and undecaprenyl phosphate: step 1/2.</text>
</comment>
<comment type="pathway">
    <text evidence="1">Bacterial outer membrane biogenesis; lipopolysaccharide biosynthesis.</text>
</comment>
<comment type="subcellular location">
    <subcellularLocation>
        <location evidence="1">Cell inner membrane</location>
        <topology evidence="1">Multi-pass membrane protein</topology>
    </subcellularLocation>
</comment>
<comment type="similarity">
    <text evidence="1">Belongs to the glycosyltransferase 2 family.</text>
</comment>
<reference key="1">
    <citation type="journal article" date="2008" name="J. Bacteriol.">
        <title>Complete genome sequence of uropathogenic Proteus mirabilis, a master of both adherence and motility.</title>
        <authorList>
            <person name="Pearson M.M."/>
            <person name="Sebaihia M."/>
            <person name="Churcher C."/>
            <person name="Quail M.A."/>
            <person name="Seshasayee A.S."/>
            <person name="Luscombe N.M."/>
            <person name="Abdellah Z."/>
            <person name="Arrosmith C."/>
            <person name="Atkin B."/>
            <person name="Chillingworth T."/>
            <person name="Hauser H."/>
            <person name="Jagels K."/>
            <person name="Moule S."/>
            <person name="Mungall K."/>
            <person name="Norbertczak H."/>
            <person name="Rabbinowitsch E."/>
            <person name="Walker D."/>
            <person name="Whithead S."/>
            <person name="Thomson N.R."/>
            <person name="Rather P.N."/>
            <person name="Parkhill J."/>
            <person name="Mobley H.L.T."/>
        </authorList>
    </citation>
    <scope>NUCLEOTIDE SEQUENCE [LARGE SCALE GENOMIC DNA]</scope>
    <source>
        <strain>HI4320</strain>
    </source>
</reference>
<name>ARNC_PROMH</name>